<organism>
    <name type="scientific">Escherichia coli O6:H1 (strain CFT073 / ATCC 700928 / UPEC)</name>
    <dbReference type="NCBI Taxonomy" id="199310"/>
    <lineage>
        <taxon>Bacteria</taxon>
        <taxon>Pseudomonadati</taxon>
        <taxon>Pseudomonadota</taxon>
        <taxon>Gammaproteobacteria</taxon>
        <taxon>Enterobacterales</taxon>
        <taxon>Enterobacteriaceae</taxon>
        <taxon>Escherichia</taxon>
    </lineage>
</organism>
<accession>Q8FB90</accession>
<name>FABR_ECOL6</name>
<reference key="1">
    <citation type="journal article" date="2002" name="Proc. Natl. Acad. Sci. U.S.A.">
        <title>Extensive mosaic structure revealed by the complete genome sequence of uropathogenic Escherichia coli.</title>
        <authorList>
            <person name="Welch R.A."/>
            <person name="Burland V."/>
            <person name="Plunkett G. III"/>
            <person name="Redford P."/>
            <person name="Roesch P."/>
            <person name="Rasko D."/>
            <person name="Buckles E.L."/>
            <person name="Liou S.-R."/>
            <person name="Boutin A."/>
            <person name="Hackett J."/>
            <person name="Stroud D."/>
            <person name="Mayhew G.F."/>
            <person name="Rose D.J."/>
            <person name="Zhou S."/>
            <person name="Schwartz D.C."/>
            <person name="Perna N.T."/>
            <person name="Mobley H.L.T."/>
            <person name="Donnenberg M.S."/>
            <person name="Blattner F.R."/>
        </authorList>
    </citation>
    <scope>NUCLEOTIDE SEQUENCE [LARGE SCALE GENOMIC DNA]</scope>
    <source>
        <strain>CFT073 / ATCC 700928 / UPEC</strain>
    </source>
</reference>
<protein>
    <recommendedName>
        <fullName evidence="1">HTH-type transcriptional repressor FabR</fullName>
    </recommendedName>
</protein>
<sequence>MGVRAQQKEKTRRSLVEAAFSQLSAERSFASLSLREVAREAGIAPTSFYRHFRDVDELGLTMVDESGLMLRQLMRQARQRIAKGGSVIRTSVSTFMEFIGNNPNAFRLLLRERSGTSAAFRAAVAREIQHFIAELADYLELENHMPRAFTEAQAEAMVTIVFSAGAEALDVGVEQRRQLEERLVLQLRMISKGAYYWYRREQEKTTIIPGNVKDE</sequence>
<keyword id="KW-0963">Cytoplasm</keyword>
<keyword id="KW-0238">DNA-binding</keyword>
<keyword id="KW-0275">Fatty acid biosynthesis</keyword>
<keyword id="KW-0276">Fatty acid metabolism</keyword>
<keyword id="KW-0444">Lipid biosynthesis</keyword>
<keyword id="KW-0443">Lipid metabolism</keyword>
<keyword id="KW-1185">Reference proteome</keyword>
<keyword id="KW-0678">Repressor</keyword>
<keyword id="KW-0804">Transcription</keyword>
<keyword id="KW-0805">Transcription regulation</keyword>
<evidence type="ECO:0000255" key="1">
    <source>
        <dbReference type="HAMAP-Rule" id="MF_01190"/>
    </source>
</evidence>
<evidence type="ECO:0000305" key="2"/>
<gene>
    <name evidence="1" type="primary">fabR</name>
    <name type="ordered locus">c4926</name>
</gene>
<proteinExistence type="inferred from homology"/>
<feature type="chain" id="PRO_0000293568" description="HTH-type transcriptional repressor FabR">
    <location>
        <begin position="1"/>
        <end position="215"/>
    </location>
</feature>
<feature type="domain" description="HTH tetR-type" evidence="1">
    <location>
        <begin position="10"/>
        <end position="70"/>
    </location>
</feature>
<feature type="DNA-binding region" description="H-T-H motif" evidence="1">
    <location>
        <begin position="33"/>
        <end position="52"/>
    </location>
</feature>
<comment type="function">
    <text evidence="1">Represses the transcription of fabB, involved in unsaturated fatty acid (UFA) biosynthesis. By controlling UFA production, FabR directly influences the physical properties of the membrane bilayer.</text>
</comment>
<comment type="subunit">
    <text evidence="1">Homodimer.</text>
</comment>
<comment type="subcellular location">
    <subcellularLocation>
        <location evidence="1">Cytoplasm</location>
    </subcellularLocation>
</comment>
<comment type="sequence caution" evidence="2">
    <conflict type="erroneous initiation">
        <sequence resource="EMBL-CDS" id="AAN83354"/>
    </conflict>
</comment>
<dbReference type="EMBL" id="AE014075">
    <property type="protein sequence ID" value="AAN83354.1"/>
    <property type="status" value="ALT_INIT"/>
    <property type="molecule type" value="Genomic_DNA"/>
</dbReference>
<dbReference type="SMR" id="Q8FB90"/>
<dbReference type="STRING" id="199310.c4926"/>
<dbReference type="KEGG" id="ecc:c4926"/>
<dbReference type="eggNOG" id="COG1309">
    <property type="taxonomic scope" value="Bacteria"/>
</dbReference>
<dbReference type="HOGENOM" id="CLU_081861_0_0_6"/>
<dbReference type="Proteomes" id="UP000001410">
    <property type="component" value="Chromosome"/>
</dbReference>
<dbReference type="GO" id="GO:0005737">
    <property type="term" value="C:cytoplasm"/>
    <property type="evidence" value="ECO:0007669"/>
    <property type="project" value="UniProtKB-SubCell"/>
</dbReference>
<dbReference type="GO" id="GO:0003677">
    <property type="term" value="F:DNA binding"/>
    <property type="evidence" value="ECO:0007669"/>
    <property type="project" value="UniProtKB-KW"/>
</dbReference>
<dbReference type="GO" id="GO:0003700">
    <property type="term" value="F:DNA-binding transcription factor activity"/>
    <property type="evidence" value="ECO:0007669"/>
    <property type="project" value="UniProtKB-UniRule"/>
</dbReference>
<dbReference type="GO" id="GO:0006633">
    <property type="term" value="P:fatty acid biosynthetic process"/>
    <property type="evidence" value="ECO:0007669"/>
    <property type="project" value="UniProtKB-UniRule"/>
</dbReference>
<dbReference type="GO" id="GO:0045717">
    <property type="term" value="P:negative regulation of fatty acid biosynthetic process"/>
    <property type="evidence" value="ECO:0007669"/>
    <property type="project" value="UniProtKB-UniRule"/>
</dbReference>
<dbReference type="FunFam" id="1.10.10.60:FF:000034">
    <property type="entry name" value="HTH-type transcriptional repressor FabR"/>
    <property type="match status" value="1"/>
</dbReference>
<dbReference type="FunFam" id="1.10.357.10:FF:000001">
    <property type="entry name" value="HTH-type transcriptional repressor FabR"/>
    <property type="match status" value="1"/>
</dbReference>
<dbReference type="Gene3D" id="1.10.10.60">
    <property type="entry name" value="Homeodomain-like"/>
    <property type="match status" value="1"/>
</dbReference>
<dbReference type="Gene3D" id="1.10.357.10">
    <property type="entry name" value="Tetracycline Repressor, domain 2"/>
    <property type="match status" value="1"/>
</dbReference>
<dbReference type="HAMAP" id="MF_01190">
    <property type="entry name" value="HTH_type_FabR"/>
    <property type="match status" value="1"/>
</dbReference>
<dbReference type="InterPro" id="IPR054129">
    <property type="entry name" value="DesT_TetR_C"/>
</dbReference>
<dbReference type="InterPro" id="IPR009057">
    <property type="entry name" value="Homeodomain-like_sf"/>
</dbReference>
<dbReference type="InterPro" id="IPR001647">
    <property type="entry name" value="HTH_TetR"/>
</dbReference>
<dbReference type="InterPro" id="IPR050692">
    <property type="entry name" value="HTH_transcr_repressor_FabR"/>
</dbReference>
<dbReference type="InterPro" id="IPR023764">
    <property type="entry name" value="Tscrpt_reg_HTH_FabR"/>
</dbReference>
<dbReference type="NCBIfam" id="NF008402">
    <property type="entry name" value="PRK11202.1"/>
    <property type="match status" value="1"/>
</dbReference>
<dbReference type="PANTHER" id="PTHR47752">
    <property type="entry name" value="HTH-TYPE TRANSCRIPTIONAL REPRESSOR FABR"/>
    <property type="match status" value="1"/>
</dbReference>
<dbReference type="PANTHER" id="PTHR47752:SF1">
    <property type="entry name" value="HTH-TYPE TRANSCRIPTIONAL REPRESSOR FABR"/>
    <property type="match status" value="1"/>
</dbReference>
<dbReference type="Pfam" id="PF21943">
    <property type="entry name" value="TetR_C_46"/>
    <property type="match status" value="1"/>
</dbReference>
<dbReference type="Pfam" id="PF00440">
    <property type="entry name" value="TetR_N"/>
    <property type="match status" value="1"/>
</dbReference>
<dbReference type="SUPFAM" id="SSF46689">
    <property type="entry name" value="Homeodomain-like"/>
    <property type="match status" value="1"/>
</dbReference>
<dbReference type="PROSITE" id="PS50977">
    <property type="entry name" value="HTH_TETR_2"/>
    <property type="match status" value="1"/>
</dbReference>